<feature type="chain" id="PRO_0000385130" description="Uncharacterized protein ORF116">
    <location>
        <begin position="1"/>
        <end position="256"/>
    </location>
</feature>
<feature type="coiled-coil region" evidence="1">
    <location>
        <begin position="187"/>
        <end position="223"/>
    </location>
</feature>
<sequence>MAAVALTYMIPPATPLAIIDFDMLPEDDESEEVGFEYEDLLDWQLKEAVDRRDLESFTILIEENWCHDLTLENGDNLLGYMIKQGHALTEEWYDLIGVTTTCHANPEGELPIDLLRKHLGSCRCNLESMNCDLVEYIIRTCYAHPINRDYVYHRMDTSRYTHKRLNRNHNLTLSIEKKPIIVEAPPMEEEEISEVEDALNVLQRLCAQEEGDNKEAETNNNNYVFPWMTPAYELPEQLTFYDMPMTPFNCNNVMYC</sequence>
<protein>
    <recommendedName>
        <fullName>Uncharacterized protein ORF116</fullName>
    </recommendedName>
</protein>
<dbReference type="EMBL" id="AY509253">
    <property type="protein sequence ID" value="AAS01005.1"/>
    <property type="molecule type" value="Genomic_DNA"/>
</dbReference>
<dbReference type="EMBL" id="AY509253">
    <property type="protein sequence ID" value="AAS01020.1"/>
    <property type="molecule type" value="Genomic_DNA"/>
</dbReference>
<dbReference type="RefSeq" id="YP_024658.1">
    <property type="nucleotide sequence ID" value="NC_005881.2"/>
</dbReference>
<dbReference type="RefSeq" id="YP_024673.1">
    <property type="nucleotide sequence ID" value="NC_005881.2"/>
</dbReference>
<dbReference type="KEGG" id="vg:2948220"/>
<dbReference type="KEGG" id="vg:2948250"/>
<dbReference type="Proteomes" id="UP000007021">
    <property type="component" value="Segment"/>
</dbReference>
<organism>
    <name type="scientific">Ostreid herpesvirus 1 (isolate France)</name>
    <name type="common">OsHV-1</name>
    <name type="synonym">Pacific oyster herpesvirus</name>
    <dbReference type="NCBI Taxonomy" id="654903"/>
    <lineage>
        <taxon>Viruses</taxon>
        <taxon>Duplodnaviria</taxon>
        <taxon>Heunggongvirae</taxon>
        <taxon>Peploviricota</taxon>
        <taxon>Herviviricetes</taxon>
        <taxon>Herpesvirales</taxon>
        <taxon>Malacoherpesviridae</taxon>
        <taxon>Ostreavirus</taxon>
        <taxon>Ostreavirus ostreidmalaco1</taxon>
        <taxon>Ostreid herpesvirus 1</taxon>
    </lineage>
</organism>
<reference key="1">
    <citation type="journal article" date="2005" name="J. Gen. Virol.">
        <title>A novel class of herpesvirus with bivalve hosts.</title>
        <authorList>
            <person name="Davison A.J."/>
            <person name="Trus B.L."/>
            <person name="Cheng N."/>
            <person name="Steven A.C."/>
            <person name="Watson M.S."/>
            <person name="Cunningham C."/>
            <person name="Le Deuff R.M."/>
            <person name="Renault T."/>
        </authorList>
    </citation>
    <scope>NUCLEOTIDE SEQUENCE [LARGE SCALE GENOMIC DNA]</scope>
</reference>
<gene>
    <name type="ORF">ORF116</name>
</gene>
<keyword id="KW-0175">Coiled coil</keyword>
<keyword id="KW-1185">Reference proteome</keyword>
<proteinExistence type="predicted"/>
<organismHost>
    <name type="scientific">Magallana gigas</name>
    <name type="common">Pacific oyster</name>
    <name type="synonym">Crassostrea gigas</name>
    <dbReference type="NCBI Taxonomy" id="29159"/>
</organismHost>
<organismHost>
    <name type="scientific">Pecten maximus</name>
    <name type="common">King scallop</name>
    <name type="synonym">Pilgrim's clam</name>
    <dbReference type="NCBI Taxonomy" id="6579"/>
</organismHost>
<accession>Q6R795</accession>
<name>Y116_OSHVF</name>
<evidence type="ECO:0000255" key="1"/>